<organism>
    <name type="scientific">Hydrogenovibrio crunogenus (strain DSM 25203 / XCL-2)</name>
    <name type="common">Thiomicrospira crunogena</name>
    <dbReference type="NCBI Taxonomy" id="317025"/>
    <lineage>
        <taxon>Bacteria</taxon>
        <taxon>Pseudomonadati</taxon>
        <taxon>Pseudomonadota</taxon>
        <taxon>Gammaproteobacteria</taxon>
        <taxon>Thiotrichales</taxon>
        <taxon>Piscirickettsiaceae</taxon>
        <taxon>Hydrogenovibrio</taxon>
    </lineage>
</organism>
<proteinExistence type="inferred from homology"/>
<keyword id="KW-0067">ATP-binding</keyword>
<keyword id="KW-0997">Cell inner membrane</keyword>
<keyword id="KW-1003">Cell membrane</keyword>
<keyword id="KW-0472">Membrane</keyword>
<keyword id="KW-0547">Nucleotide-binding</keyword>
<keyword id="KW-0592">Phosphate transport</keyword>
<keyword id="KW-1278">Translocase</keyword>
<keyword id="KW-0813">Transport</keyword>
<evidence type="ECO:0000255" key="1">
    <source>
        <dbReference type="HAMAP-Rule" id="MF_01702"/>
    </source>
</evidence>
<reference key="1">
    <citation type="journal article" date="2006" name="PLoS Biol.">
        <title>The genome of deep-sea vent chemolithoautotroph Thiomicrospira crunogena XCL-2.</title>
        <authorList>
            <person name="Scott K.M."/>
            <person name="Sievert S.M."/>
            <person name="Abril F.N."/>
            <person name="Ball L.A."/>
            <person name="Barrett C.J."/>
            <person name="Blake R.A."/>
            <person name="Boller A.J."/>
            <person name="Chain P.S.G."/>
            <person name="Clark J.A."/>
            <person name="Davis C.R."/>
            <person name="Detter C."/>
            <person name="Do K.F."/>
            <person name="Dobrinski K.P."/>
            <person name="Faza B.I."/>
            <person name="Fitzpatrick K.A."/>
            <person name="Freyermuth S.K."/>
            <person name="Harmer T.L."/>
            <person name="Hauser L.J."/>
            <person name="Huegler M."/>
            <person name="Kerfeld C.A."/>
            <person name="Klotz M.G."/>
            <person name="Kong W.W."/>
            <person name="Land M."/>
            <person name="Lapidus A."/>
            <person name="Larimer F.W."/>
            <person name="Longo D.L."/>
            <person name="Lucas S."/>
            <person name="Malfatti S.A."/>
            <person name="Massey S.E."/>
            <person name="Martin D.D."/>
            <person name="McCuddin Z."/>
            <person name="Meyer F."/>
            <person name="Moore J.L."/>
            <person name="Ocampo L.H. Jr."/>
            <person name="Paul J.H."/>
            <person name="Paulsen I.T."/>
            <person name="Reep D.K."/>
            <person name="Ren Q."/>
            <person name="Ross R.L."/>
            <person name="Sato P.Y."/>
            <person name="Thomas P."/>
            <person name="Tinkham L.E."/>
            <person name="Zeruth G.T."/>
        </authorList>
    </citation>
    <scope>NUCLEOTIDE SEQUENCE [LARGE SCALE GENOMIC DNA]</scope>
    <source>
        <strain>DSM 25203 / XCL-2</strain>
    </source>
</reference>
<gene>
    <name evidence="1" type="primary">pstB</name>
    <name type="ordered locus">Tcr_0539</name>
</gene>
<name>PSTB_HYDCU</name>
<accession>Q31I88</accession>
<feature type="chain" id="PRO_0000272568" description="Phosphate import ATP-binding protein PstB">
    <location>
        <begin position="1"/>
        <end position="272"/>
    </location>
</feature>
<feature type="domain" description="ABC transporter" evidence="1">
    <location>
        <begin position="26"/>
        <end position="267"/>
    </location>
</feature>
<feature type="binding site" evidence="1">
    <location>
        <begin position="58"/>
        <end position="65"/>
    </location>
    <ligand>
        <name>ATP</name>
        <dbReference type="ChEBI" id="CHEBI:30616"/>
    </ligand>
</feature>
<protein>
    <recommendedName>
        <fullName evidence="1">Phosphate import ATP-binding protein PstB</fullName>
        <ecNumber evidence="1">7.3.2.1</ecNumber>
    </recommendedName>
    <alternativeName>
        <fullName evidence="1">ABC phosphate transporter</fullName>
    </alternativeName>
    <alternativeName>
        <fullName evidence="1">Phosphate-transporting ATPase</fullName>
    </alternativeName>
</protein>
<dbReference type="EC" id="7.3.2.1" evidence="1"/>
<dbReference type="EMBL" id="CP000109">
    <property type="protein sequence ID" value="ABB41135.1"/>
    <property type="molecule type" value="Genomic_DNA"/>
</dbReference>
<dbReference type="SMR" id="Q31I88"/>
<dbReference type="STRING" id="317025.Tcr_0539"/>
<dbReference type="KEGG" id="tcx:Tcr_0539"/>
<dbReference type="eggNOG" id="COG1117">
    <property type="taxonomic scope" value="Bacteria"/>
</dbReference>
<dbReference type="HOGENOM" id="CLU_000604_1_22_6"/>
<dbReference type="OrthoDB" id="9802264at2"/>
<dbReference type="GO" id="GO:0005886">
    <property type="term" value="C:plasma membrane"/>
    <property type="evidence" value="ECO:0007669"/>
    <property type="project" value="UniProtKB-SubCell"/>
</dbReference>
<dbReference type="GO" id="GO:0005524">
    <property type="term" value="F:ATP binding"/>
    <property type="evidence" value="ECO:0007669"/>
    <property type="project" value="UniProtKB-KW"/>
</dbReference>
<dbReference type="GO" id="GO:0016887">
    <property type="term" value="F:ATP hydrolysis activity"/>
    <property type="evidence" value="ECO:0007669"/>
    <property type="project" value="InterPro"/>
</dbReference>
<dbReference type="GO" id="GO:0015415">
    <property type="term" value="F:ATPase-coupled phosphate ion transmembrane transporter activity"/>
    <property type="evidence" value="ECO:0007669"/>
    <property type="project" value="UniProtKB-EC"/>
</dbReference>
<dbReference type="GO" id="GO:0035435">
    <property type="term" value="P:phosphate ion transmembrane transport"/>
    <property type="evidence" value="ECO:0007669"/>
    <property type="project" value="InterPro"/>
</dbReference>
<dbReference type="CDD" id="cd03260">
    <property type="entry name" value="ABC_PstB_phosphate_transporter"/>
    <property type="match status" value="1"/>
</dbReference>
<dbReference type="FunFam" id="3.40.50.300:FF:000132">
    <property type="entry name" value="Phosphate import ATP-binding protein PstB"/>
    <property type="match status" value="1"/>
</dbReference>
<dbReference type="Gene3D" id="3.40.50.300">
    <property type="entry name" value="P-loop containing nucleotide triphosphate hydrolases"/>
    <property type="match status" value="1"/>
</dbReference>
<dbReference type="InterPro" id="IPR003593">
    <property type="entry name" value="AAA+_ATPase"/>
</dbReference>
<dbReference type="InterPro" id="IPR003439">
    <property type="entry name" value="ABC_transporter-like_ATP-bd"/>
</dbReference>
<dbReference type="InterPro" id="IPR017871">
    <property type="entry name" value="ABC_transporter-like_CS"/>
</dbReference>
<dbReference type="InterPro" id="IPR027417">
    <property type="entry name" value="P-loop_NTPase"/>
</dbReference>
<dbReference type="InterPro" id="IPR005670">
    <property type="entry name" value="PstB-like"/>
</dbReference>
<dbReference type="NCBIfam" id="TIGR00972">
    <property type="entry name" value="3a0107s01c2"/>
    <property type="match status" value="1"/>
</dbReference>
<dbReference type="PANTHER" id="PTHR43423">
    <property type="entry name" value="ABC TRANSPORTER I FAMILY MEMBER 17"/>
    <property type="match status" value="1"/>
</dbReference>
<dbReference type="PANTHER" id="PTHR43423:SF12">
    <property type="entry name" value="IRON EXPORT ATP-BINDING PROTEIN FETA-RELATED"/>
    <property type="match status" value="1"/>
</dbReference>
<dbReference type="Pfam" id="PF00005">
    <property type="entry name" value="ABC_tran"/>
    <property type="match status" value="1"/>
</dbReference>
<dbReference type="SMART" id="SM00382">
    <property type="entry name" value="AAA"/>
    <property type="match status" value="1"/>
</dbReference>
<dbReference type="SUPFAM" id="SSF52540">
    <property type="entry name" value="P-loop containing nucleoside triphosphate hydrolases"/>
    <property type="match status" value="1"/>
</dbReference>
<dbReference type="PROSITE" id="PS00211">
    <property type="entry name" value="ABC_TRANSPORTER_1"/>
    <property type="match status" value="1"/>
</dbReference>
<dbReference type="PROSITE" id="PS50893">
    <property type="entry name" value="ABC_TRANSPORTER_2"/>
    <property type="match status" value="1"/>
</dbReference>
<dbReference type="PROSITE" id="PS51238">
    <property type="entry name" value="PSTB"/>
    <property type="match status" value="1"/>
</dbReference>
<sequence>MSEQNMSIAIDRHHRGMTLDSEQTAIVVKNWNLYYGSKQALHNITMKLPQNRVTAFIGPSGCGKSTLLRCFNRMNDLIDIVSVEGEMLLHGENMYAKEMDVAALRRRVGMVFQKPNPFPKSIYENVCYGLRLQGINDKNVLDETVEWALKGAGLWEEAKDRLDENALGLSGGQQQRLCIARAIAIKPEVLLLDEPTSALDPISTLAIEELIFELKKDFTILIVTHNMQQAARVSDYTAFMYMGDLIEYTDTDSLFTNPQVKRTEDYISGRYG</sequence>
<comment type="function">
    <text evidence="1">Part of the ABC transporter complex PstSACB involved in phosphate import. Responsible for energy coupling to the transport system.</text>
</comment>
<comment type="catalytic activity">
    <reaction evidence="1">
        <text>phosphate(out) + ATP + H2O = ADP + 2 phosphate(in) + H(+)</text>
        <dbReference type="Rhea" id="RHEA:24440"/>
        <dbReference type="ChEBI" id="CHEBI:15377"/>
        <dbReference type="ChEBI" id="CHEBI:15378"/>
        <dbReference type="ChEBI" id="CHEBI:30616"/>
        <dbReference type="ChEBI" id="CHEBI:43474"/>
        <dbReference type="ChEBI" id="CHEBI:456216"/>
        <dbReference type="EC" id="7.3.2.1"/>
    </reaction>
</comment>
<comment type="subunit">
    <text evidence="1">The complex is composed of two ATP-binding proteins (PstB), two transmembrane proteins (PstC and PstA) and a solute-binding protein (PstS).</text>
</comment>
<comment type="subcellular location">
    <subcellularLocation>
        <location evidence="1">Cell inner membrane</location>
        <topology evidence="1">Peripheral membrane protein</topology>
    </subcellularLocation>
</comment>
<comment type="similarity">
    <text evidence="1">Belongs to the ABC transporter superfamily. Phosphate importer (TC 3.A.1.7) family.</text>
</comment>